<protein>
    <recommendedName>
        <fullName evidence="1">Glycine dehydrogenase (decarboxylating)</fullName>
        <ecNumber evidence="1">1.4.4.2</ecNumber>
    </recommendedName>
    <alternativeName>
        <fullName evidence="1">Glycine cleavage system P-protein</fullName>
    </alternativeName>
    <alternativeName>
        <fullName evidence="1">Glycine decarboxylase</fullName>
    </alternativeName>
    <alternativeName>
        <fullName evidence="1">Glycine dehydrogenase (aminomethyl-transferring)</fullName>
    </alternativeName>
</protein>
<sequence>MSAGFVQRHLGPSPAEQAQMLQRLGCRDLEQLLQECVPAEILIDADQARDALPQECDERQALRELEQRAAANTVLRNLIGLGYYDTATPALIQRHVLENPAWYTAYTPYQAEIAQGRLEALLNFQTLISELTGLPIANASLLDEATAAAEAMTLAYGACRLKQARRFHVQADLFPQTLAVLQTRAEPLGIELVVADPAAMDFGDDSFGLLLQLPTASGACPDPTEVIARAKAADVLVIAAVDPLAQVLMPPVAQLGVQIAVGSAQRFGVPLGFGGPHAAFFATTEAYKRQIPGRLVGMSRDAAGEPALRLALQTREQHIRRDKATSNICTAQVLLAVMAGFYAVHHGPDGLTAIARRVQRLTAALAAGLQQLGLDVAAAPAFDTLRLRLDQPNGWIERLEAAGFNLLPLPDGAGISLDECSDEAEVQALLECFAAGCGRTAPAISELLAATPQAKSVGELPVRPAGWLPQAVFQLYRSETELLRYIQRLVSKDFSLVHGMIPLGSCTMKLNAAAELQPVSWAAFNRLHPFVPAAQRQGYDQLINELEAWLATITGFAAVSLQPNAGSQGEYAGLLVIRAWHRQRGEGHRNICLIPTSAHGTNPASAVMAGMQVVAVQCDEAGNIDQADLAAKAEQHADQLAALMVTYPSTHGVFEQGISDICALIHRHGGQVYLDGANLNAQVGVCQPGRFGADVCHLNLHKTFCIPHGGGGPGVGPIAVAAHLAPFLPGHPLVPCGGEQAIGPVSAAPWGSASILPISWMYIRLMGGAGLRQATAVALLAANDLAERLEPHFPVLYRGANGRVAHECILDLRPLKRSAGLEVDDLAKRLMDYGFHAPTVSWPVAGTVMVEPTESESLLELDRFVEAMMAIRAEAAAIEAGLCDRDDNPLRRAPHTLAAVTADVWERPYSREQAAYPVQGLRSNKLWPAVSRIDNAFGDRNLICTCPSVEELARAAG</sequence>
<reference key="1">
    <citation type="submission" date="2006-05" db="EMBL/GenBank/DDBJ databases">
        <authorList>
            <consortium name="Genoscope"/>
        </authorList>
    </citation>
    <scope>NUCLEOTIDE SEQUENCE [LARGE SCALE GENOMIC DNA]</scope>
    <source>
        <strain>RCC307</strain>
    </source>
</reference>
<evidence type="ECO:0000255" key="1">
    <source>
        <dbReference type="HAMAP-Rule" id="MF_00711"/>
    </source>
</evidence>
<keyword id="KW-0560">Oxidoreductase</keyword>
<keyword id="KW-0663">Pyridoxal phosphate</keyword>
<keyword id="KW-1185">Reference proteome</keyword>
<accession>A5GWN4</accession>
<organism>
    <name type="scientific">Synechococcus sp. (strain RCC307)</name>
    <dbReference type="NCBI Taxonomy" id="316278"/>
    <lineage>
        <taxon>Bacteria</taxon>
        <taxon>Bacillati</taxon>
        <taxon>Cyanobacteriota</taxon>
        <taxon>Cyanophyceae</taxon>
        <taxon>Synechococcales</taxon>
        <taxon>Synechococcaceae</taxon>
        <taxon>Synechococcus</taxon>
    </lineage>
</organism>
<dbReference type="EC" id="1.4.4.2" evidence="1"/>
<dbReference type="EMBL" id="CT978603">
    <property type="protein sequence ID" value="CAK29293.1"/>
    <property type="molecule type" value="Genomic_DNA"/>
</dbReference>
<dbReference type="SMR" id="A5GWN4"/>
<dbReference type="STRING" id="316278.SynRCC307_2390"/>
<dbReference type="KEGG" id="syr:SynRCC307_2390"/>
<dbReference type="eggNOG" id="COG0403">
    <property type="taxonomic scope" value="Bacteria"/>
</dbReference>
<dbReference type="eggNOG" id="COG1003">
    <property type="taxonomic scope" value="Bacteria"/>
</dbReference>
<dbReference type="HOGENOM" id="CLU_004620_3_2_3"/>
<dbReference type="OrthoDB" id="9801272at2"/>
<dbReference type="Proteomes" id="UP000001115">
    <property type="component" value="Chromosome"/>
</dbReference>
<dbReference type="GO" id="GO:0005829">
    <property type="term" value="C:cytosol"/>
    <property type="evidence" value="ECO:0007669"/>
    <property type="project" value="TreeGrafter"/>
</dbReference>
<dbReference type="GO" id="GO:0005960">
    <property type="term" value="C:glycine cleavage complex"/>
    <property type="evidence" value="ECO:0007669"/>
    <property type="project" value="TreeGrafter"/>
</dbReference>
<dbReference type="GO" id="GO:0016594">
    <property type="term" value="F:glycine binding"/>
    <property type="evidence" value="ECO:0007669"/>
    <property type="project" value="TreeGrafter"/>
</dbReference>
<dbReference type="GO" id="GO:0004375">
    <property type="term" value="F:glycine dehydrogenase (decarboxylating) activity"/>
    <property type="evidence" value="ECO:0007669"/>
    <property type="project" value="UniProtKB-EC"/>
</dbReference>
<dbReference type="GO" id="GO:0030170">
    <property type="term" value="F:pyridoxal phosphate binding"/>
    <property type="evidence" value="ECO:0007669"/>
    <property type="project" value="TreeGrafter"/>
</dbReference>
<dbReference type="GO" id="GO:0019464">
    <property type="term" value="P:glycine decarboxylation via glycine cleavage system"/>
    <property type="evidence" value="ECO:0007669"/>
    <property type="project" value="UniProtKB-UniRule"/>
</dbReference>
<dbReference type="CDD" id="cd00613">
    <property type="entry name" value="GDC-P"/>
    <property type="match status" value="1"/>
</dbReference>
<dbReference type="FunFam" id="3.40.640.10:FF:000007">
    <property type="entry name" value="glycine dehydrogenase (Decarboxylating), mitochondrial"/>
    <property type="match status" value="1"/>
</dbReference>
<dbReference type="Gene3D" id="3.90.1150.10">
    <property type="entry name" value="Aspartate Aminotransferase, domain 1"/>
    <property type="match status" value="2"/>
</dbReference>
<dbReference type="Gene3D" id="3.40.640.10">
    <property type="entry name" value="Type I PLP-dependent aspartate aminotransferase-like (Major domain)"/>
    <property type="match status" value="2"/>
</dbReference>
<dbReference type="HAMAP" id="MF_00711">
    <property type="entry name" value="GcvP"/>
    <property type="match status" value="1"/>
</dbReference>
<dbReference type="InterPro" id="IPR003437">
    <property type="entry name" value="GcvP"/>
</dbReference>
<dbReference type="InterPro" id="IPR049316">
    <property type="entry name" value="GDC-P_C"/>
</dbReference>
<dbReference type="InterPro" id="IPR049315">
    <property type="entry name" value="GDC-P_N"/>
</dbReference>
<dbReference type="InterPro" id="IPR020581">
    <property type="entry name" value="GDC_P"/>
</dbReference>
<dbReference type="InterPro" id="IPR015424">
    <property type="entry name" value="PyrdxlP-dep_Trfase"/>
</dbReference>
<dbReference type="InterPro" id="IPR015421">
    <property type="entry name" value="PyrdxlP-dep_Trfase_major"/>
</dbReference>
<dbReference type="InterPro" id="IPR015422">
    <property type="entry name" value="PyrdxlP-dep_Trfase_small"/>
</dbReference>
<dbReference type="NCBIfam" id="TIGR00461">
    <property type="entry name" value="gcvP"/>
    <property type="match status" value="1"/>
</dbReference>
<dbReference type="PANTHER" id="PTHR11773:SF1">
    <property type="entry name" value="GLYCINE DEHYDROGENASE (DECARBOXYLATING), MITOCHONDRIAL"/>
    <property type="match status" value="1"/>
</dbReference>
<dbReference type="PANTHER" id="PTHR11773">
    <property type="entry name" value="GLYCINE DEHYDROGENASE, DECARBOXYLATING"/>
    <property type="match status" value="1"/>
</dbReference>
<dbReference type="Pfam" id="PF21478">
    <property type="entry name" value="GcvP2_C"/>
    <property type="match status" value="1"/>
</dbReference>
<dbReference type="Pfam" id="PF02347">
    <property type="entry name" value="GDC-P"/>
    <property type="match status" value="2"/>
</dbReference>
<dbReference type="SUPFAM" id="SSF53383">
    <property type="entry name" value="PLP-dependent transferases"/>
    <property type="match status" value="2"/>
</dbReference>
<gene>
    <name evidence="1" type="primary">gcvP</name>
    <name type="ordered locus">SynRCC307_2390</name>
</gene>
<name>GCSP_SYNR3</name>
<proteinExistence type="inferred from homology"/>
<comment type="function">
    <text evidence="1">The glycine cleavage system catalyzes the degradation of glycine. The P protein binds the alpha-amino group of glycine through its pyridoxal phosphate cofactor; CO(2) is released and the remaining methylamine moiety is then transferred to the lipoamide cofactor of the H protein.</text>
</comment>
<comment type="catalytic activity">
    <reaction evidence="1">
        <text>N(6)-[(R)-lipoyl]-L-lysyl-[glycine-cleavage complex H protein] + glycine + H(+) = N(6)-[(R)-S(8)-aminomethyldihydrolipoyl]-L-lysyl-[glycine-cleavage complex H protein] + CO2</text>
        <dbReference type="Rhea" id="RHEA:24304"/>
        <dbReference type="Rhea" id="RHEA-COMP:10494"/>
        <dbReference type="Rhea" id="RHEA-COMP:10495"/>
        <dbReference type="ChEBI" id="CHEBI:15378"/>
        <dbReference type="ChEBI" id="CHEBI:16526"/>
        <dbReference type="ChEBI" id="CHEBI:57305"/>
        <dbReference type="ChEBI" id="CHEBI:83099"/>
        <dbReference type="ChEBI" id="CHEBI:83143"/>
        <dbReference type="EC" id="1.4.4.2"/>
    </reaction>
</comment>
<comment type="cofactor">
    <cofactor evidence="1">
        <name>pyridoxal 5'-phosphate</name>
        <dbReference type="ChEBI" id="CHEBI:597326"/>
    </cofactor>
</comment>
<comment type="subunit">
    <text evidence="1">The glycine cleavage system is composed of four proteins: P, T, L and H.</text>
</comment>
<comment type="similarity">
    <text evidence="1">Belongs to the GcvP family.</text>
</comment>
<feature type="chain" id="PRO_1000045622" description="Glycine dehydrogenase (decarboxylating)">
    <location>
        <begin position="1"/>
        <end position="957"/>
    </location>
</feature>
<feature type="modified residue" description="N6-(pyridoxal phosphate)lysine" evidence="1">
    <location>
        <position position="702"/>
    </location>
</feature>